<sequence length="113" mass="12167">MSEMPTPVNFTEAAASKVSGLIQDEGNPELKLRVYITGGGCSGFQYGFTFDESQAEDDTVVEKDGVKLMIDPMSFQYLMGAKIDYLEDLQGARFVIENPNASTTCGCGSSFGV</sequence>
<dbReference type="EMBL" id="CP000109">
    <property type="protein sequence ID" value="ABB40945.1"/>
    <property type="molecule type" value="Genomic_DNA"/>
</dbReference>
<dbReference type="SMR" id="Q31IS8"/>
<dbReference type="STRING" id="317025.Tcr_0349"/>
<dbReference type="KEGG" id="tcx:Tcr_0349"/>
<dbReference type="eggNOG" id="COG0316">
    <property type="taxonomic scope" value="Bacteria"/>
</dbReference>
<dbReference type="HOGENOM" id="CLU_069054_5_3_6"/>
<dbReference type="OrthoDB" id="9801228at2"/>
<dbReference type="GO" id="GO:0005829">
    <property type="term" value="C:cytosol"/>
    <property type="evidence" value="ECO:0007669"/>
    <property type="project" value="TreeGrafter"/>
</dbReference>
<dbReference type="GO" id="GO:0051537">
    <property type="term" value="F:2 iron, 2 sulfur cluster binding"/>
    <property type="evidence" value="ECO:0007669"/>
    <property type="project" value="TreeGrafter"/>
</dbReference>
<dbReference type="GO" id="GO:0051539">
    <property type="term" value="F:4 iron, 4 sulfur cluster binding"/>
    <property type="evidence" value="ECO:0007669"/>
    <property type="project" value="TreeGrafter"/>
</dbReference>
<dbReference type="GO" id="GO:0005506">
    <property type="term" value="F:iron ion binding"/>
    <property type="evidence" value="ECO:0007669"/>
    <property type="project" value="UniProtKB-UniRule"/>
</dbReference>
<dbReference type="GO" id="GO:0016226">
    <property type="term" value="P:iron-sulfur cluster assembly"/>
    <property type="evidence" value="ECO:0007669"/>
    <property type="project" value="UniProtKB-UniRule"/>
</dbReference>
<dbReference type="FunFam" id="2.60.300.12:FF:000002">
    <property type="entry name" value="Iron-sulfur cluster insertion protein ErpA"/>
    <property type="match status" value="1"/>
</dbReference>
<dbReference type="Gene3D" id="2.60.300.12">
    <property type="entry name" value="HesB-like domain"/>
    <property type="match status" value="1"/>
</dbReference>
<dbReference type="HAMAP" id="MF_01380">
    <property type="entry name" value="Fe_S_insert_ErpA"/>
    <property type="match status" value="1"/>
</dbReference>
<dbReference type="InterPro" id="IPR000361">
    <property type="entry name" value="FeS_biogenesis"/>
</dbReference>
<dbReference type="InterPro" id="IPR016092">
    <property type="entry name" value="FeS_cluster_insertion"/>
</dbReference>
<dbReference type="InterPro" id="IPR017870">
    <property type="entry name" value="FeS_cluster_insertion_CS"/>
</dbReference>
<dbReference type="InterPro" id="IPR023063">
    <property type="entry name" value="FeS_cluster_insertion_RrpA"/>
</dbReference>
<dbReference type="InterPro" id="IPR035903">
    <property type="entry name" value="HesB-like_dom_sf"/>
</dbReference>
<dbReference type="NCBIfam" id="TIGR00049">
    <property type="entry name" value="iron-sulfur cluster assembly accessory protein"/>
    <property type="match status" value="1"/>
</dbReference>
<dbReference type="NCBIfam" id="NF010147">
    <property type="entry name" value="PRK13623.1"/>
    <property type="match status" value="1"/>
</dbReference>
<dbReference type="PANTHER" id="PTHR43011">
    <property type="entry name" value="IRON-SULFUR CLUSTER ASSEMBLY 2 HOMOLOG, MITOCHONDRIAL"/>
    <property type="match status" value="1"/>
</dbReference>
<dbReference type="PANTHER" id="PTHR43011:SF1">
    <property type="entry name" value="IRON-SULFUR CLUSTER ASSEMBLY 2 HOMOLOG, MITOCHONDRIAL"/>
    <property type="match status" value="1"/>
</dbReference>
<dbReference type="Pfam" id="PF01521">
    <property type="entry name" value="Fe-S_biosyn"/>
    <property type="match status" value="1"/>
</dbReference>
<dbReference type="SUPFAM" id="SSF89360">
    <property type="entry name" value="HesB-like domain"/>
    <property type="match status" value="1"/>
</dbReference>
<dbReference type="PROSITE" id="PS01152">
    <property type="entry name" value="HESB"/>
    <property type="match status" value="1"/>
</dbReference>
<keyword id="KW-0408">Iron</keyword>
<keyword id="KW-0411">Iron-sulfur</keyword>
<keyword id="KW-0479">Metal-binding</keyword>
<evidence type="ECO:0000255" key="1">
    <source>
        <dbReference type="HAMAP-Rule" id="MF_01380"/>
    </source>
</evidence>
<name>ERPA_HYDCU</name>
<organism>
    <name type="scientific">Hydrogenovibrio crunogenus (strain DSM 25203 / XCL-2)</name>
    <name type="common">Thiomicrospira crunogena</name>
    <dbReference type="NCBI Taxonomy" id="317025"/>
    <lineage>
        <taxon>Bacteria</taxon>
        <taxon>Pseudomonadati</taxon>
        <taxon>Pseudomonadota</taxon>
        <taxon>Gammaproteobacteria</taxon>
        <taxon>Thiotrichales</taxon>
        <taxon>Piscirickettsiaceae</taxon>
        <taxon>Hydrogenovibrio</taxon>
    </lineage>
</organism>
<reference key="1">
    <citation type="journal article" date="2006" name="PLoS Biol.">
        <title>The genome of deep-sea vent chemolithoautotroph Thiomicrospira crunogena XCL-2.</title>
        <authorList>
            <person name="Scott K.M."/>
            <person name="Sievert S.M."/>
            <person name="Abril F.N."/>
            <person name="Ball L.A."/>
            <person name="Barrett C.J."/>
            <person name="Blake R.A."/>
            <person name="Boller A.J."/>
            <person name="Chain P.S.G."/>
            <person name="Clark J.A."/>
            <person name="Davis C.R."/>
            <person name="Detter C."/>
            <person name="Do K.F."/>
            <person name="Dobrinski K.P."/>
            <person name="Faza B.I."/>
            <person name="Fitzpatrick K.A."/>
            <person name="Freyermuth S.K."/>
            <person name="Harmer T.L."/>
            <person name="Hauser L.J."/>
            <person name="Huegler M."/>
            <person name="Kerfeld C.A."/>
            <person name="Klotz M.G."/>
            <person name="Kong W.W."/>
            <person name="Land M."/>
            <person name="Lapidus A."/>
            <person name="Larimer F.W."/>
            <person name="Longo D.L."/>
            <person name="Lucas S."/>
            <person name="Malfatti S.A."/>
            <person name="Massey S.E."/>
            <person name="Martin D.D."/>
            <person name="McCuddin Z."/>
            <person name="Meyer F."/>
            <person name="Moore J.L."/>
            <person name="Ocampo L.H. Jr."/>
            <person name="Paul J.H."/>
            <person name="Paulsen I.T."/>
            <person name="Reep D.K."/>
            <person name="Ren Q."/>
            <person name="Ross R.L."/>
            <person name="Sato P.Y."/>
            <person name="Thomas P."/>
            <person name="Tinkham L.E."/>
            <person name="Zeruth G.T."/>
        </authorList>
    </citation>
    <scope>NUCLEOTIDE SEQUENCE [LARGE SCALE GENOMIC DNA]</scope>
    <source>
        <strain>DSM 25203 / XCL-2</strain>
    </source>
</reference>
<proteinExistence type="inferred from homology"/>
<feature type="chain" id="PRO_0000311565" description="Iron-sulfur cluster insertion protein ErpA">
    <location>
        <begin position="1"/>
        <end position="113"/>
    </location>
</feature>
<feature type="binding site" evidence="1">
    <location>
        <position position="41"/>
    </location>
    <ligand>
        <name>iron-sulfur cluster</name>
        <dbReference type="ChEBI" id="CHEBI:30408"/>
    </ligand>
</feature>
<feature type="binding site" evidence="1">
    <location>
        <position position="105"/>
    </location>
    <ligand>
        <name>iron-sulfur cluster</name>
        <dbReference type="ChEBI" id="CHEBI:30408"/>
    </ligand>
</feature>
<feature type="binding site" evidence="1">
    <location>
        <position position="107"/>
    </location>
    <ligand>
        <name>iron-sulfur cluster</name>
        <dbReference type="ChEBI" id="CHEBI:30408"/>
    </ligand>
</feature>
<comment type="function">
    <text evidence="1">Required for insertion of 4Fe-4S clusters for at least IspG.</text>
</comment>
<comment type="cofactor">
    <cofactor evidence="1">
        <name>iron-sulfur cluster</name>
        <dbReference type="ChEBI" id="CHEBI:30408"/>
    </cofactor>
    <text evidence="1">Binds 1 iron-sulfur cluster per subunit.</text>
</comment>
<comment type="subunit">
    <text evidence="1">Homodimer.</text>
</comment>
<comment type="similarity">
    <text evidence="1">Belongs to the HesB/IscA family.</text>
</comment>
<protein>
    <recommendedName>
        <fullName evidence="1">Iron-sulfur cluster insertion protein ErpA</fullName>
    </recommendedName>
</protein>
<accession>Q31IS8</accession>
<gene>
    <name evidence="1" type="primary">erpA</name>
    <name type="ordered locus">Tcr_0349</name>
</gene>